<evidence type="ECO:0000250" key="1"/>
<evidence type="ECO:0000250" key="2">
    <source>
        <dbReference type="UniProtKB" id="P18089"/>
    </source>
</evidence>
<evidence type="ECO:0000255" key="3">
    <source>
        <dbReference type="PROSITE-ProRule" id="PRU00521"/>
    </source>
</evidence>
<evidence type="ECO:0000256" key="4">
    <source>
        <dbReference type="SAM" id="MobiDB-lite"/>
    </source>
</evidence>
<gene>
    <name type="primary">ADRA2B</name>
</gene>
<accession>O77715</accession>
<comment type="function">
    <text>Alpha-2 adrenergic receptors mediate the catecholamine-induced inhibition of adenylate cyclase through the action of G proteins.</text>
</comment>
<comment type="subunit">
    <text evidence="2">Interacts with RAB26. Interacts with PPP1R9B. Interacts with GGA1, GGA2 and GGA3.</text>
</comment>
<comment type="subcellular location">
    <subcellularLocation>
        <location evidence="2">Cell membrane</location>
        <topology evidence="2">Multi-pass membrane protein</topology>
    </subcellularLocation>
    <text evidence="2">Interaction with RAB26, GGA1, GGA2 and GGA3 mediates transport from the Golgi to the cell membrane.</text>
</comment>
<comment type="similarity">
    <text evidence="3">Belongs to the G-protein coupled receptor 1 family. Adrenergic receptor subfamily. ADRA2B sub-subfamily.</text>
</comment>
<protein>
    <recommendedName>
        <fullName>Alpha-2B adrenergic receptor</fullName>
    </recommendedName>
    <alternativeName>
        <fullName>Alpha-2B adrenoreceptor</fullName>
        <shortName>Alpha-2B adrenoceptor</shortName>
        <shortName>Alpha-2BAR</shortName>
    </alternativeName>
</protein>
<reference key="1">
    <citation type="journal article" date="1998" name="Mol. Phylogenet. Evol.">
        <title>Highly congruent molecular support for a diverse superordinal clade of endemic African mammals.</title>
        <authorList>
            <person name="Stanhope M.J."/>
            <person name="Madsen O.J."/>
            <person name="Waddell V.G."/>
            <person name="Cleven G.C."/>
            <person name="de Jong W.W."/>
            <person name="Springer M.S."/>
        </authorList>
    </citation>
    <scope>NUCLEOTIDE SEQUENCE [GENOMIC DNA]</scope>
</reference>
<keyword id="KW-1003">Cell membrane</keyword>
<keyword id="KW-1015">Disulfide bond</keyword>
<keyword id="KW-0297">G-protein coupled receptor</keyword>
<keyword id="KW-0472">Membrane</keyword>
<keyword id="KW-0675">Receptor</keyword>
<keyword id="KW-0807">Transducer</keyword>
<keyword id="KW-0812">Transmembrane</keyword>
<keyword id="KW-1133">Transmembrane helix</keyword>
<sequence length="382" mass="41870">AIAAVITFLILFTIFGNALVILAVLTSRSLRAPQNLFLVSLAAADILVATLIIPFSLANELLGYWYFRHTWCEVYLALDVLFCTSSIVHLCAISLDRYWSVSRALEYNSKRTPRRIKGIILTVWLIAAFISLPPLIYKGDKGKKPGGRPQCKLNEEAWYILSSSIGSFFAPCLIMILVYLRIYLIAKRRNRQGPHGKQAPGDGDTGPSALGGTSTISKLPPSILPAVGEANGHSKPPGEREGGEQMGDPTSPSTPPNQSSVGPEDGSQKQEEEEEEEEEEEEECGPPAPPTSSSLQGTPNFQPSQGSQVLATLRGQVLLARGPASLGLQPWRRRTQMNREKRFTFVLAVVIGVFVLCWFPFFFSYSLGAICPQHCKVPHGLF</sequence>
<name>ADA2B_DIDVI</name>
<dbReference type="EMBL" id="Y15943">
    <property type="protein sequence ID" value="CAA75896.1"/>
    <property type="molecule type" value="Genomic_DNA"/>
</dbReference>
<dbReference type="SMR" id="O77715"/>
<dbReference type="BindingDB" id="O77715"/>
<dbReference type="GO" id="GO:0009986">
    <property type="term" value="C:cell surface"/>
    <property type="evidence" value="ECO:0000250"/>
    <property type="project" value="UniProtKB"/>
</dbReference>
<dbReference type="GO" id="GO:0005886">
    <property type="term" value="C:plasma membrane"/>
    <property type="evidence" value="ECO:0007669"/>
    <property type="project" value="UniProtKB-SubCell"/>
</dbReference>
<dbReference type="GO" id="GO:0004938">
    <property type="term" value="F:alpha2-adrenergic receptor activity"/>
    <property type="evidence" value="ECO:0007669"/>
    <property type="project" value="InterPro"/>
</dbReference>
<dbReference type="GO" id="GO:0051379">
    <property type="term" value="F:epinephrine binding"/>
    <property type="evidence" value="ECO:0007669"/>
    <property type="project" value="TreeGrafter"/>
</dbReference>
<dbReference type="GO" id="GO:0030168">
    <property type="term" value="P:platelet activation"/>
    <property type="evidence" value="ECO:0007669"/>
    <property type="project" value="InterPro"/>
</dbReference>
<dbReference type="GO" id="GO:0006940">
    <property type="term" value="P:regulation of smooth muscle contraction"/>
    <property type="evidence" value="ECO:0007669"/>
    <property type="project" value="InterPro"/>
</dbReference>
<dbReference type="GO" id="GO:0019229">
    <property type="term" value="P:regulation of vasoconstriction"/>
    <property type="evidence" value="ECO:0007669"/>
    <property type="project" value="InterPro"/>
</dbReference>
<dbReference type="CDD" id="cd15321">
    <property type="entry name" value="7tmA_alpha2B_AR"/>
    <property type="match status" value="1"/>
</dbReference>
<dbReference type="FunFam" id="1.20.1070.10:FF:000330">
    <property type="entry name" value="Alpha 2B adrenergic receptor"/>
    <property type="match status" value="1"/>
</dbReference>
<dbReference type="FunFam" id="1.20.1070.10:FF:000185">
    <property type="entry name" value="Alpha-2B adrenergic receptor"/>
    <property type="match status" value="1"/>
</dbReference>
<dbReference type="Gene3D" id="1.20.1070.10">
    <property type="entry name" value="Rhodopsin 7-helix transmembrane proteins"/>
    <property type="match status" value="1"/>
</dbReference>
<dbReference type="InterPro" id="IPR002233">
    <property type="entry name" value="ADR_fam"/>
</dbReference>
<dbReference type="InterPro" id="IPR000207">
    <property type="entry name" value="ADRA2B_rcpt"/>
</dbReference>
<dbReference type="InterPro" id="IPR000276">
    <property type="entry name" value="GPCR_Rhodpsn"/>
</dbReference>
<dbReference type="InterPro" id="IPR017452">
    <property type="entry name" value="GPCR_Rhodpsn_7TM"/>
</dbReference>
<dbReference type="PANTHER" id="PTHR24248">
    <property type="entry name" value="ADRENERGIC RECEPTOR-RELATED G-PROTEIN COUPLED RECEPTOR"/>
    <property type="match status" value="1"/>
</dbReference>
<dbReference type="PANTHER" id="PTHR24248:SF130">
    <property type="entry name" value="ALPHA-2B ADRENERGIC RECEPTOR"/>
    <property type="match status" value="1"/>
</dbReference>
<dbReference type="Pfam" id="PF00001">
    <property type="entry name" value="7tm_1"/>
    <property type="match status" value="1"/>
</dbReference>
<dbReference type="PRINTS" id="PR01103">
    <property type="entry name" value="ADRENERGICR"/>
</dbReference>
<dbReference type="PRINTS" id="PR00559">
    <property type="entry name" value="ADRENRGCA2BR"/>
</dbReference>
<dbReference type="PRINTS" id="PR00237">
    <property type="entry name" value="GPCRRHODOPSN"/>
</dbReference>
<dbReference type="SMART" id="SM01381">
    <property type="entry name" value="7TM_GPCR_Srsx"/>
    <property type="match status" value="1"/>
</dbReference>
<dbReference type="SUPFAM" id="SSF81321">
    <property type="entry name" value="Family A G protein-coupled receptor-like"/>
    <property type="match status" value="1"/>
</dbReference>
<dbReference type="PROSITE" id="PS00237">
    <property type="entry name" value="G_PROTEIN_RECEP_F1_1"/>
    <property type="match status" value="1"/>
</dbReference>
<dbReference type="PROSITE" id="PS50262">
    <property type="entry name" value="G_PROTEIN_RECEP_F1_2"/>
    <property type="match status" value="1"/>
</dbReference>
<proteinExistence type="inferred from homology"/>
<organism>
    <name type="scientific">Didelphis virginiana</name>
    <name type="common">North American opossum</name>
    <name type="synonym">Didelphis marsupialis virginiana</name>
    <dbReference type="NCBI Taxonomy" id="9267"/>
    <lineage>
        <taxon>Eukaryota</taxon>
        <taxon>Metazoa</taxon>
        <taxon>Chordata</taxon>
        <taxon>Craniata</taxon>
        <taxon>Vertebrata</taxon>
        <taxon>Euteleostomi</taxon>
        <taxon>Mammalia</taxon>
        <taxon>Metatheria</taxon>
        <taxon>Didelphimorphia</taxon>
        <taxon>Didelphidae</taxon>
        <taxon>Didelphis</taxon>
    </lineage>
</organism>
<feature type="chain" id="PRO_0000069088" description="Alpha-2B adrenergic receptor">
    <location>
        <begin position="1" status="less than"/>
        <end position="382" status="greater than"/>
    </location>
</feature>
<feature type="transmembrane region" description="Helical; Name=1" evidence="1">
    <location>
        <begin position="1" status="less than"/>
        <end position="25"/>
    </location>
</feature>
<feature type="topological domain" description="Cytoplasmic" evidence="1">
    <location>
        <begin position="26"/>
        <end position="36"/>
    </location>
</feature>
<feature type="transmembrane region" description="Helical; Name=2" evidence="1">
    <location>
        <begin position="37"/>
        <end position="62"/>
    </location>
</feature>
<feature type="topological domain" description="Extracellular" evidence="1">
    <location>
        <begin position="63"/>
        <end position="72"/>
    </location>
</feature>
<feature type="transmembrane region" description="Helical; Name=3" evidence="1">
    <location>
        <begin position="73"/>
        <end position="95"/>
    </location>
</feature>
<feature type="topological domain" description="Cytoplasmic" evidence="1">
    <location>
        <begin position="96"/>
        <end position="117"/>
    </location>
</feature>
<feature type="transmembrane region" description="Helical; Name=4" evidence="1">
    <location>
        <begin position="118"/>
        <end position="140"/>
    </location>
</feature>
<feature type="topological domain" description="Extracellular" evidence="1">
    <location>
        <begin position="141"/>
        <end position="156"/>
    </location>
</feature>
<feature type="transmembrane region" description="Helical; Name=5" evidence="1">
    <location>
        <begin position="157"/>
        <end position="180"/>
    </location>
</feature>
<feature type="topological domain" description="Cytoplasmic" evidence="1">
    <location>
        <begin position="181"/>
        <end position="346"/>
    </location>
</feature>
<feature type="transmembrane region" description="Helical; Name=6" evidence="1">
    <location>
        <begin position="347"/>
        <end position="370"/>
    </location>
</feature>
<feature type="topological domain" description="Extracellular" evidence="1">
    <location>
        <begin position="371"/>
        <end position="379"/>
    </location>
</feature>
<feature type="transmembrane region" description="Helical; Name=7" evidence="1">
    <location>
        <begin position="380"/>
        <end position="382" status="greater than"/>
    </location>
</feature>
<feature type="region of interest" description="Disordered" evidence="4">
    <location>
        <begin position="192"/>
        <end position="305"/>
    </location>
</feature>
<feature type="compositionally biased region" description="Acidic residues" evidence="4">
    <location>
        <begin position="271"/>
        <end position="284"/>
    </location>
</feature>
<feature type="compositionally biased region" description="Polar residues" evidence="4">
    <location>
        <begin position="291"/>
        <end position="305"/>
    </location>
</feature>
<feature type="disulfide bond" evidence="3">
    <location>
        <begin position="72"/>
        <end position="151"/>
    </location>
</feature>
<feature type="non-terminal residue">
    <location>
        <position position="1"/>
    </location>
</feature>
<feature type="non-terminal residue">
    <location>
        <position position="382"/>
    </location>
</feature>